<feature type="chain" id="PRO_0000359787" description="BLOC-1-related complex subunit 7">
    <location>
        <begin position="1"/>
        <end position="103"/>
    </location>
</feature>
<keyword id="KW-0458">Lysosome</keyword>
<keyword id="KW-0472">Membrane</keyword>
<keyword id="KW-1185">Reference proteome</keyword>
<organism>
    <name type="scientific">Danio rerio</name>
    <name type="common">Zebrafish</name>
    <name type="synonym">Brachydanio rerio</name>
    <dbReference type="NCBI Taxonomy" id="7955"/>
    <lineage>
        <taxon>Eukaryota</taxon>
        <taxon>Metazoa</taxon>
        <taxon>Chordata</taxon>
        <taxon>Craniata</taxon>
        <taxon>Vertebrata</taxon>
        <taxon>Euteleostomi</taxon>
        <taxon>Actinopterygii</taxon>
        <taxon>Neopterygii</taxon>
        <taxon>Teleostei</taxon>
        <taxon>Ostariophysi</taxon>
        <taxon>Cypriniformes</taxon>
        <taxon>Danionidae</taxon>
        <taxon>Danioninae</taxon>
        <taxon>Danio</taxon>
    </lineage>
</organism>
<dbReference type="EMBL" id="AL928951">
    <property type="protein sequence ID" value="CAM12925.1"/>
    <property type="molecule type" value="Genomic_DNA"/>
</dbReference>
<dbReference type="EMBL" id="BC097219">
    <property type="protein sequence ID" value="AAH97219.1"/>
    <property type="molecule type" value="mRNA"/>
</dbReference>
<dbReference type="RefSeq" id="NP_001035077.1">
    <property type="nucleotide sequence ID" value="NM_001039988.1"/>
</dbReference>
<dbReference type="SMR" id="Q4V8S9"/>
<dbReference type="FunCoup" id="Q4V8S9">
    <property type="interactions" value="987"/>
</dbReference>
<dbReference type="STRING" id="7955.ENSDARP00000071850"/>
<dbReference type="PaxDb" id="7955-ENSDARP00000071850"/>
<dbReference type="Ensembl" id="ENSDART00000077383">
    <property type="protein sequence ID" value="ENSDARP00000071850"/>
    <property type="gene ID" value="ENSDARG00000055070"/>
</dbReference>
<dbReference type="GeneID" id="664759"/>
<dbReference type="KEGG" id="dre:664759"/>
<dbReference type="AGR" id="ZFIN:ZDB-GENE-050913-112"/>
<dbReference type="CTD" id="119032"/>
<dbReference type="ZFIN" id="ZDB-GENE-050913-112">
    <property type="gene designation" value="borcs7"/>
</dbReference>
<dbReference type="eggNOG" id="ENOG502S2QS">
    <property type="taxonomic scope" value="Eukaryota"/>
</dbReference>
<dbReference type="HOGENOM" id="CLU_150749_1_0_1"/>
<dbReference type="InParanoid" id="Q4V8S9"/>
<dbReference type="OMA" id="HAAKNFA"/>
<dbReference type="OrthoDB" id="5567844at2759"/>
<dbReference type="PhylomeDB" id="Q4V8S9"/>
<dbReference type="TreeFam" id="TF314767"/>
<dbReference type="PRO" id="PR:Q4V8S9"/>
<dbReference type="Proteomes" id="UP000000437">
    <property type="component" value="Chromosome 13"/>
</dbReference>
<dbReference type="Bgee" id="ENSDARG00000055070">
    <property type="expression patterns" value="Expressed in early embryo and 28 other cell types or tissues"/>
</dbReference>
<dbReference type="GO" id="GO:0099078">
    <property type="term" value="C:BORC complex"/>
    <property type="evidence" value="ECO:0000250"/>
    <property type="project" value="UniProtKB"/>
</dbReference>
<dbReference type="GO" id="GO:0005765">
    <property type="term" value="C:lysosomal membrane"/>
    <property type="evidence" value="ECO:0007669"/>
    <property type="project" value="UniProtKB-SubCell"/>
</dbReference>
<dbReference type="InterPro" id="IPR032143">
    <property type="entry name" value="BORCS7"/>
</dbReference>
<dbReference type="PANTHER" id="PTHR31397:SF1">
    <property type="entry name" value="BLOC-1-RELATED COMPLEX SUBUNIT 7"/>
    <property type="match status" value="1"/>
</dbReference>
<dbReference type="PANTHER" id="PTHR31397">
    <property type="entry name" value="BLOC-1-RELATED COMPLEX SUBUNIT 7 BORSC7"/>
    <property type="match status" value="1"/>
</dbReference>
<dbReference type="Pfam" id="PF16088">
    <property type="entry name" value="BORCS7"/>
    <property type="match status" value="1"/>
</dbReference>
<proteinExistence type="inferred from homology"/>
<comment type="function">
    <text evidence="1">As part of a BORC-like complex may play a role in lysosomes movement and localization at the cell periphery. Associated with the cytosolic face of lysosomes, this complex may couple lysosomes to microtubule plus-end-directed kinesin motor.</text>
</comment>
<comment type="subcellular location">
    <subcellularLocation>
        <location evidence="1">Lysosome membrane</location>
    </subcellularLocation>
</comment>
<comment type="similarity">
    <text evidence="2">Belongs to the BORCS7 family.</text>
</comment>
<sequence>MASSETQPRFGQSVKGLLSDKVTSCSGDVIALTRQVLKGSRSQELLSQAARNMVIQEDAILHSEDSLRKMSIITTHLQYQQEAIQKNVEHSKNLQDQLRHLMK</sequence>
<evidence type="ECO:0000250" key="1">
    <source>
        <dbReference type="UniProtKB" id="Q96B45"/>
    </source>
</evidence>
<evidence type="ECO:0000305" key="2"/>
<evidence type="ECO:0000312" key="3">
    <source>
        <dbReference type="EMBL" id="AAH97219.1"/>
    </source>
</evidence>
<evidence type="ECO:0000312" key="4">
    <source>
        <dbReference type="EMBL" id="CAM12925.1"/>
    </source>
</evidence>
<name>BORC7_DANRE</name>
<gene>
    <name evidence="1" type="primary">borcs7</name>
    <name evidence="4" type="ORF">si:ch211-67n3.3</name>
    <name evidence="3" type="ORF">zgc:114169</name>
</gene>
<protein>
    <recommendedName>
        <fullName evidence="2">BLOC-1-related complex subunit 7</fullName>
    </recommendedName>
</protein>
<reference key="1">
    <citation type="journal article" date="2013" name="Nature">
        <title>The zebrafish reference genome sequence and its relationship to the human genome.</title>
        <authorList>
            <person name="Howe K."/>
            <person name="Clark M.D."/>
            <person name="Torroja C.F."/>
            <person name="Torrance J."/>
            <person name="Berthelot C."/>
            <person name="Muffato M."/>
            <person name="Collins J.E."/>
            <person name="Humphray S."/>
            <person name="McLaren K."/>
            <person name="Matthews L."/>
            <person name="McLaren S."/>
            <person name="Sealy I."/>
            <person name="Caccamo M."/>
            <person name="Churcher C."/>
            <person name="Scott C."/>
            <person name="Barrett J.C."/>
            <person name="Koch R."/>
            <person name="Rauch G.J."/>
            <person name="White S."/>
            <person name="Chow W."/>
            <person name="Kilian B."/>
            <person name="Quintais L.T."/>
            <person name="Guerra-Assuncao J.A."/>
            <person name="Zhou Y."/>
            <person name="Gu Y."/>
            <person name="Yen J."/>
            <person name="Vogel J.H."/>
            <person name="Eyre T."/>
            <person name="Redmond S."/>
            <person name="Banerjee R."/>
            <person name="Chi J."/>
            <person name="Fu B."/>
            <person name="Langley E."/>
            <person name="Maguire S.F."/>
            <person name="Laird G.K."/>
            <person name="Lloyd D."/>
            <person name="Kenyon E."/>
            <person name="Donaldson S."/>
            <person name="Sehra H."/>
            <person name="Almeida-King J."/>
            <person name="Loveland J."/>
            <person name="Trevanion S."/>
            <person name="Jones M."/>
            <person name="Quail M."/>
            <person name="Willey D."/>
            <person name="Hunt A."/>
            <person name="Burton J."/>
            <person name="Sims S."/>
            <person name="McLay K."/>
            <person name="Plumb B."/>
            <person name="Davis J."/>
            <person name="Clee C."/>
            <person name="Oliver K."/>
            <person name="Clark R."/>
            <person name="Riddle C."/>
            <person name="Elliot D."/>
            <person name="Threadgold G."/>
            <person name="Harden G."/>
            <person name="Ware D."/>
            <person name="Begum S."/>
            <person name="Mortimore B."/>
            <person name="Kerry G."/>
            <person name="Heath P."/>
            <person name="Phillimore B."/>
            <person name="Tracey A."/>
            <person name="Corby N."/>
            <person name="Dunn M."/>
            <person name="Johnson C."/>
            <person name="Wood J."/>
            <person name="Clark S."/>
            <person name="Pelan S."/>
            <person name="Griffiths G."/>
            <person name="Smith M."/>
            <person name="Glithero R."/>
            <person name="Howden P."/>
            <person name="Barker N."/>
            <person name="Lloyd C."/>
            <person name="Stevens C."/>
            <person name="Harley J."/>
            <person name="Holt K."/>
            <person name="Panagiotidis G."/>
            <person name="Lovell J."/>
            <person name="Beasley H."/>
            <person name="Henderson C."/>
            <person name="Gordon D."/>
            <person name="Auger K."/>
            <person name="Wright D."/>
            <person name="Collins J."/>
            <person name="Raisen C."/>
            <person name="Dyer L."/>
            <person name="Leung K."/>
            <person name="Robertson L."/>
            <person name="Ambridge K."/>
            <person name="Leongamornlert D."/>
            <person name="McGuire S."/>
            <person name="Gilderthorp R."/>
            <person name="Griffiths C."/>
            <person name="Manthravadi D."/>
            <person name="Nichol S."/>
            <person name="Barker G."/>
            <person name="Whitehead S."/>
            <person name="Kay M."/>
            <person name="Brown J."/>
            <person name="Murnane C."/>
            <person name="Gray E."/>
            <person name="Humphries M."/>
            <person name="Sycamore N."/>
            <person name="Barker D."/>
            <person name="Saunders D."/>
            <person name="Wallis J."/>
            <person name="Babbage A."/>
            <person name="Hammond S."/>
            <person name="Mashreghi-Mohammadi M."/>
            <person name="Barr L."/>
            <person name="Martin S."/>
            <person name="Wray P."/>
            <person name="Ellington A."/>
            <person name="Matthews N."/>
            <person name="Ellwood M."/>
            <person name="Woodmansey R."/>
            <person name="Clark G."/>
            <person name="Cooper J."/>
            <person name="Tromans A."/>
            <person name="Grafham D."/>
            <person name="Skuce C."/>
            <person name="Pandian R."/>
            <person name="Andrews R."/>
            <person name="Harrison E."/>
            <person name="Kimberley A."/>
            <person name="Garnett J."/>
            <person name="Fosker N."/>
            <person name="Hall R."/>
            <person name="Garner P."/>
            <person name="Kelly D."/>
            <person name="Bird C."/>
            <person name="Palmer S."/>
            <person name="Gehring I."/>
            <person name="Berger A."/>
            <person name="Dooley C.M."/>
            <person name="Ersan-Urun Z."/>
            <person name="Eser C."/>
            <person name="Geiger H."/>
            <person name="Geisler M."/>
            <person name="Karotki L."/>
            <person name="Kirn A."/>
            <person name="Konantz J."/>
            <person name="Konantz M."/>
            <person name="Oberlander M."/>
            <person name="Rudolph-Geiger S."/>
            <person name="Teucke M."/>
            <person name="Lanz C."/>
            <person name="Raddatz G."/>
            <person name="Osoegawa K."/>
            <person name="Zhu B."/>
            <person name="Rapp A."/>
            <person name="Widaa S."/>
            <person name="Langford C."/>
            <person name="Yang F."/>
            <person name="Schuster S.C."/>
            <person name="Carter N.P."/>
            <person name="Harrow J."/>
            <person name="Ning Z."/>
            <person name="Herrero J."/>
            <person name="Searle S.M."/>
            <person name="Enright A."/>
            <person name="Geisler R."/>
            <person name="Plasterk R.H."/>
            <person name="Lee C."/>
            <person name="Westerfield M."/>
            <person name="de Jong P.J."/>
            <person name="Zon L.I."/>
            <person name="Postlethwait J.H."/>
            <person name="Nusslein-Volhard C."/>
            <person name="Hubbard T.J."/>
            <person name="Roest Crollius H."/>
            <person name="Rogers J."/>
            <person name="Stemple D.L."/>
        </authorList>
    </citation>
    <scope>NUCLEOTIDE SEQUENCE [LARGE SCALE GENOMIC DNA]</scope>
    <source>
        <strain>Tuebingen</strain>
    </source>
</reference>
<reference key="2">
    <citation type="submission" date="2005-06" db="EMBL/GenBank/DDBJ databases">
        <authorList>
            <consortium name="NIH - Zebrafish Gene Collection (ZGC) project"/>
        </authorList>
    </citation>
    <scope>NUCLEOTIDE SEQUENCE [LARGE SCALE MRNA]</scope>
    <source>
        <tissue>Larva</tissue>
    </source>
</reference>
<accession>Q4V8S9</accession>